<comment type="similarity">
    <text evidence="1">Belongs to the UPF0301 (AlgH) family.</text>
</comment>
<feature type="chain" id="PRO_0000214342" description="UPF0301 protein RC0043">
    <location>
        <begin position="1"/>
        <end position="189"/>
    </location>
</feature>
<name>Y043_RICCN</name>
<protein>
    <recommendedName>
        <fullName evidence="1">UPF0301 protein RC0043</fullName>
    </recommendedName>
</protein>
<sequence>MGDKIFHNLSGKTLVATPHVITKGIYHKSLIYMLSHTEEGAIGLIFNRLVNHIDLKSFFKIKNDEITTPVMVPIYLGGPVEHEKGFFLHSSDYNKNLLLDFHNDLAVSSNLEISEDIAFGKGPKNSLFIVGYTAWKPGQLEEELETNLWLVMDCNKEFIFADNPESKWHNALKHLGIDEIHFSSQIGNA</sequence>
<accession>Q92JM4</accession>
<gene>
    <name type="ordered locus">RC0043</name>
</gene>
<proteinExistence type="inferred from homology"/>
<dbReference type="EMBL" id="AE006914">
    <property type="protein sequence ID" value="AAL02581.1"/>
    <property type="molecule type" value="Genomic_DNA"/>
</dbReference>
<dbReference type="PIR" id="C97705">
    <property type="entry name" value="C97705"/>
</dbReference>
<dbReference type="RefSeq" id="WP_010976730.1">
    <property type="nucleotide sequence ID" value="NC_003103.1"/>
</dbReference>
<dbReference type="SMR" id="Q92JM4"/>
<dbReference type="GeneID" id="928622"/>
<dbReference type="KEGG" id="rco:RC0043"/>
<dbReference type="HOGENOM" id="CLU_057596_1_0_5"/>
<dbReference type="Proteomes" id="UP000000816">
    <property type="component" value="Chromosome"/>
</dbReference>
<dbReference type="GO" id="GO:0005829">
    <property type="term" value="C:cytosol"/>
    <property type="evidence" value="ECO:0007669"/>
    <property type="project" value="TreeGrafter"/>
</dbReference>
<dbReference type="Gene3D" id="3.40.1740.10">
    <property type="entry name" value="VC0467-like"/>
    <property type="match status" value="1"/>
</dbReference>
<dbReference type="HAMAP" id="MF_00758">
    <property type="entry name" value="UPF0301"/>
    <property type="match status" value="1"/>
</dbReference>
<dbReference type="InterPro" id="IPR003774">
    <property type="entry name" value="AlgH-like"/>
</dbReference>
<dbReference type="NCBIfam" id="NF001268">
    <property type="entry name" value="PRK00228.1-4"/>
    <property type="match status" value="1"/>
</dbReference>
<dbReference type="PANTHER" id="PTHR30327">
    <property type="entry name" value="UNCHARACTERIZED PROTEIN YQGE"/>
    <property type="match status" value="1"/>
</dbReference>
<dbReference type="PANTHER" id="PTHR30327:SF1">
    <property type="entry name" value="UPF0301 PROTEIN YQGE"/>
    <property type="match status" value="1"/>
</dbReference>
<dbReference type="Pfam" id="PF02622">
    <property type="entry name" value="DUF179"/>
    <property type="match status" value="1"/>
</dbReference>
<dbReference type="SUPFAM" id="SSF143456">
    <property type="entry name" value="VC0467-like"/>
    <property type="match status" value="1"/>
</dbReference>
<reference key="1">
    <citation type="journal article" date="2001" name="Science">
        <title>Mechanisms of evolution in Rickettsia conorii and R. prowazekii.</title>
        <authorList>
            <person name="Ogata H."/>
            <person name="Audic S."/>
            <person name="Renesto-Audiffren P."/>
            <person name="Fournier P.-E."/>
            <person name="Barbe V."/>
            <person name="Samson D."/>
            <person name="Roux V."/>
            <person name="Cossart P."/>
            <person name="Weissenbach J."/>
            <person name="Claverie J.-M."/>
            <person name="Raoult D."/>
        </authorList>
    </citation>
    <scope>NUCLEOTIDE SEQUENCE [LARGE SCALE GENOMIC DNA]</scope>
    <source>
        <strain>ATCC VR-613 / Malish 7</strain>
    </source>
</reference>
<evidence type="ECO:0000255" key="1">
    <source>
        <dbReference type="HAMAP-Rule" id="MF_00758"/>
    </source>
</evidence>
<organism>
    <name type="scientific">Rickettsia conorii (strain ATCC VR-613 / Malish 7)</name>
    <dbReference type="NCBI Taxonomy" id="272944"/>
    <lineage>
        <taxon>Bacteria</taxon>
        <taxon>Pseudomonadati</taxon>
        <taxon>Pseudomonadota</taxon>
        <taxon>Alphaproteobacteria</taxon>
        <taxon>Rickettsiales</taxon>
        <taxon>Rickettsiaceae</taxon>
        <taxon>Rickettsieae</taxon>
        <taxon>Rickettsia</taxon>
        <taxon>spotted fever group</taxon>
    </lineage>
</organism>